<feature type="chain" id="PRO_0000281072" description="Transcription-repair-coupling factor">
    <location>
        <begin position="1"/>
        <end position="1122"/>
    </location>
</feature>
<feature type="domain" description="Helicase ATP-binding" evidence="1">
    <location>
        <begin position="593"/>
        <end position="758"/>
    </location>
</feature>
<feature type="domain" description="Helicase C-terminal" evidence="1">
    <location>
        <begin position="779"/>
        <end position="933"/>
    </location>
</feature>
<feature type="short sequence motif" description="DEEQ box">
    <location>
        <begin position="711"/>
        <end position="714"/>
    </location>
</feature>
<feature type="binding site" evidence="1">
    <location>
        <begin position="606"/>
        <end position="613"/>
    </location>
    <ligand>
        <name>ATP</name>
        <dbReference type="ChEBI" id="CHEBI:30616"/>
    </ligand>
</feature>
<accession>Q92H58</accession>
<evidence type="ECO:0000255" key="1">
    <source>
        <dbReference type="HAMAP-Rule" id="MF_00969"/>
    </source>
</evidence>
<gene>
    <name evidence="1" type="primary">mfd</name>
    <name type="ordered locus">RC0913</name>
</gene>
<reference key="1">
    <citation type="journal article" date="2001" name="Science">
        <title>Mechanisms of evolution in Rickettsia conorii and R. prowazekii.</title>
        <authorList>
            <person name="Ogata H."/>
            <person name="Audic S."/>
            <person name="Renesto-Audiffren P."/>
            <person name="Fournier P.-E."/>
            <person name="Barbe V."/>
            <person name="Samson D."/>
            <person name="Roux V."/>
            <person name="Cossart P."/>
            <person name="Weissenbach J."/>
            <person name="Claverie J.-M."/>
            <person name="Raoult D."/>
        </authorList>
    </citation>
    <scope>NUCLEOTIDE SEQUENCE [LARGE SCALE GENOMIC DNA]</scope>
    <source>
        <strain>ATCC VR-613 / Malish 7</strain>
    </source>
</reference>
<proteinExistence type="inferred from homology"/>
<protein>
    <recommendedName>
        <fullName evidence="1">Transcription-repair-coupling factor</fullName>
        <shortName evidence="1">TRCF</shortName>
        <ecNumber evidence="1">3.6.4.-</ecNumber>
    </recommendedName>
</protein>
<name>MFD_RICCN</name>
<comment type="function">
    <text evidence="1">Couples transcription and DNA repair by recognizing RNA polymerase (RNAP) stalled at DNA lesions. Mediates ATP-dependent release of RNAP and its truncated transcript from the DNA, and recruitment of nucleotide excision repair machinery to the damaged site.</text>
</comment>
<comment type="subcellular location">
    <subcellularLocation>
        <location evidence="1">Cytoplasm</location>
    </subcellularLocation>
</comment>
<comment type="similarity">
    <text evidence="1">In the N-terminal section; belongs to the UvrB family.</text>
</comment>
<comment type="similarity">
    <text evidence="1">In the C-terminal section; belongs to the helicase family. RecG subfamily.</text>
</comment>
<dbReference type="EC" id="3.6.4.-" evidence="1"/>
<dbReference type="EMBL" id="AE006914">
    <property type="protein sequence ID" value="AAL03451.1"/>
    <property type="molecule type" value="Genomic_DNA"/>
</dbReference>
<dbReference type="PIR" id="A97814">
    <property type="entry name" value="A97814"/>
</dbReference>
<dbReference type="RefSeq" id="WP_010977513.1">
    <property type="nucleotide sequence ID" value="NC_003103.1"/>
</dbReference>
<dbReference type="SMR" id="Q92H58"/>
<dbReference type="GeneID" id="928843"/>
<dbReference type="KEGG" id="rco:RC0913"/>
<dbReference type="PATRIC" id="fig|272944.4.peg.1038"/>
<dbReference type="HOGENOM" id="CLU_005122_3_2_5"/>
<dbReference type="Proteomes" id="UP000000816">
    <property type="component" value="Chromosome"/>
</dbReference>
<dbReference type="GO" id="GO:0005737">
    <property type="term" value="C:cytoplasm"/>
    <property type="evidence" value="ECO:0007669"/>
    <property type="project" value="UniProtKB-SubCell"/>
</dbReference>
<dbReference type="GO" id="GO:0005524">
    <property type="term" value="F:ATP binding"/>
    <property type="evidence" value="ECO:0007669"/>
    <property type="project" value="UniProtKB-UniRule"/>
</dbReference>
<dbReference type="GO" id="GO:0003684">
    <property type="term" value="F:damaged DNA binding"/>
    <property type="evidence" value="ECO:0007669"/>
    <property type="project" value="InterPro"/>
</dbReference>
<dbReference type="GO" id="GO:0003678">
    <property type="term" value="F:DNA helicase activity"/>
    <property type="evidence" value="ECO:0007669"/>
    <property type="project" value="TreeGrafter"/>
</dbReference>
<dbReference type="GO" id="GO:0016787">
    <property type="term" value="F:hydrolase activity"/>
    <property type="evidence" value="ECO:0007669"/>
    <property type="project" value="UniProtKB-KW"/>
</dbReference>
<dbReference type="GO" id="GO:0006355">
    <property type="term" value="P:regulation of DNA-templated transcription"/>
    <property type="evidence" value="ECO:0007669"/>
    <property type="project" value="UniProtKB-UniRule"/>
</dbReference>
<dbReference type="GO" id="GO:0000716">
    <property type="term" value="P:transcription-coupled nucleotide-excision repair, DNA damage recognition"/>
    <property type="evidence" value="ECO:0007669"/>
    <property type="project" value="UniProtKB-UniRule"/>
</dbReference>
<dbReference type="CDD" id="cd17991">
    <property type="entry name" value="DEXHc_TRCF"/>
    <property type="match status" value="1"/>
</dbReference>
<dbReference type="CDD" id="cd18810">
    <property type="entry name" value="SF2_C_TRCF"/>
    <property type="match status" value="1"/>
</dbReference>
<dbReference type="Gene3D" id="2.40.10.170">
    <property type="match status" value="1"/>
</dbReference>
<dbReference type="Gene3D" id="3.40.50.11180">
    <property type="match status" value="1"/>
</dbReference>
<dbReference type="Gene3D" id="3.40.50.300">
    <property type="entry name" value="P-loop containing nucleotide triphosphate hydrolases"/>
    <property type="match status" value="2"/>
</dbReference>
<dbReference type="Gene3D" id="3.30.2060.10">
    <property type="entry name" value="Penicillin-binding protein 1b domain"/>
    <property type="match status" value="1"/>
</dbReference>
<dbReference type="Gene3D" id="3.90.1150.50">
    <property type="entry name" value="Transcription-repair-coupling factor, D7 domain"/>
    <property type="match status" value="1"/>
</dbReference>
<dbReference type="HAMAP" id="MF_00969">
    <property type="entry name" value="TRCF"/>
    <property type="match status" value="1"/>
</dbReference>
<dbReference type="InterPro" id="IPR003711">
    <property type="entry name" value="CarD-like/TRCF_RID"/>
</dbReference>
<dbReference type="InterPro" id="IPR036101">
    <property type="entry name" value="CarD-like/TRCF_RID_sf"/>
</dbReference>
<dbReference type="InterPro" id="IPR011545">
    <property type="entry name" value="DEAD/DEAH_box_helicase_dom"/>
</dbReference>
<dbReference type="InterPro" id="IPR014001">
    <property type="entry name" value="Helicase_ATP-bd"/>
</dbReference>
<dbReference type="InterPro" id="IPR001650">
    <property type="entry name" value="Helicase_C-like"/>
</dbReference>
<dbReference type="InterPro" id="IPR004576">
    <property type="entry name" value="Mfd"/>
</dbReference>
<dbReference type="InterPro" id="IPR027417">
    <property type="entry name" value="P-loop_NTPase"/>
</dbReference>
<dbReference type="InterPro" id="IPR047112">
    <property type="entry name" value="RecG/Mfd"/>
</dbReference>
<dbReference type="InterPro" id="IPR037235">
    <property type="entry name" value="TRCF-like_C_D7"/>
</dbReference>
<dbReference type="InterPro" id="IPR005118">
    <property type="entry name" value="TRCF_C"/>
</dbReference>
<dbReference type="InterPro" id="IPR041471">
    <property type="entry name" value="UvrB_inter"/>
</dbReference>
<dbReference type="NCBIfam" id="TIGR00580">
    <property type="entry name" value="mfd"/>
    <property type="match status" value="1"/>
</dbReference>
<dbReference type="PANTHER" id="PTHR47964">
    <property type="entry name" value="ATP-DEPENDENT DNA HELICASE HOMOLOG RECG, CHLOROPLASTIC"/>
    <property type="match status" value="1"/>
</dbReference>
<dbReference type="PANTHER" id="PTHR47964:SF1">
    <property type="entry name" value="ATP-DEPENDENT DNA HELICASE HOMOLOG RECG, CHLOROPLASTIC"/>
    <property type="match status" value="1"/>
</dbReference>
<dbReference type="Pfam" id="PF02559">
    <property type="entry name" value="CarD_TRCF_RID"/>
    <property type="match status" value="1"/>
</dbReference>
<dbReference type="Pfam" id="PF00270">
    <property type="entry name" value="DEAD"/>
    <property type="match status" value="1"/>
</dbReference>
<dbReference type="Pfam" id="PF00271">
    <property type="entry name" value="Helicase_C"/>
    <property type="match status" value="1"/>
</dbReference>
<dbReference type="Pfam" id="PF03461">
    <property type="entry name" value="TRCF"/>
    <property type="match status" value="1"/>
</dbReference>
<dbReference type="Pfam" id="PF17757">
    <property type="entry name" value="UvrB_inter"/>
    <property type="match status" value="1"/>
</dbReference>
<dbReference type="SMART" id="SM01058">
    <property type="entry name" value="CarD_TRCF"/>
    <property type="match status" value="1"/>
</dbReference>
<dbReference type="SMART" id="SM00487">
    <property type="entry name" value="DEXDc"/>
    <property type="match status" value="1"/>
</dbReference>
<dbReference type="SMART" id="SM00490">
    <property type="entry name" value="HELICc"/>
    <property type="match status" value="1"/>
</dbReference>
<dbReference type="SMART" id="SM00982">
    <property type="entry name" value="TRCF"/>
    <property type="match status" value="1"/>
</dbReference>
<dbReference type="SUPFAM" id="SSF141259">
    <property type="entry name" value="CarD-like"/>
    <property type="match status" value="1"/>
</dbReference>
<dbReference type="SUPFAM" id="SSF52540">
    <property type="entry name" value="P-loop containing nucleoside triphosphate hydrolases"/>
    <property type="match status" value="3"/>
</dbReference>
<dbReference type="SUPFAM" id="SSF143517">
    <property type="entry name" value="TRCF domain-like"/>
    <property type="match status" value="1"/>
</dbReference>
<dbReference type="PROSITE" id="PS51192">
    <property type="entry name" value="HELICASE_ATP_BIND_1"/>
    <property type="match status" value="1"/>
</dbReference>
<dbReference type="PROSITE" id="PS51194">
    <property type="entry name" value="HELICASE_CTER"/>
    <property type="match status" value="1"/>
</dbReference>
<keyword id="KW-0067">ATP-binding</keyword>
<keyword id="KW-0963">Cytoplasm</keyword>
<keyword id="KW-0227">DNA damage</keyword>
<keyword id="KW-0234">DNA repair</keyword>
<keyword id="KW-0238">DNA-binding</keyword>
<keyword id="KW-0347">Helicase</keyword>
<keyword id="KW-0378">Hydrolase</keyword>
<keyword id="KW-0547">Nucleotide-binding</keyword>
<sequence>MLQQKFPAAAKSFFAIDNFTKNLKQDFILSASNEEEALQLYKQALFFSSNENIYYFPSYNTIPYDHTSPNANILSRRAETLIKLTTNNSNSNKLLITHTANLLNKLPPKDFFSKYFLKLSPKMKFTTDELAMFLVENSFTRNASSIDVGEFAVRGEIIDIILSGPKAYRIHFSWGYIESIKEFDIDTQISTKSCRELIISPANEIVLNSETIGNFKNNYLRNFGVNHTDNALYEAVISGRKFTGYEQLLPLFYDSCSNLIDYLNDPIFIFDNLSKKAILEFEHSYNDFYSARSEANKLKFNSFYPTLSPTSLYFTASEITELLEQKNNILLTFENSEQASLIKNIAATSFIEKKTVFDKLFEVIKANSHKKIIIGSSVLSSFERIKSIIQNYEYKYNEINKLDEAKASIINVAIIPLNQSFYTKEYLFITASELLEEKPSSTNTNKKLKNILLELDNLAEGEFVVHKDHGIGQFLKLEALEIKGKPHDFLKILYAGNDKLYIPVESIEVIKKYGNDNAELDKLGSVSWQRSKAKLKKRIKEIALHLIQIAAKRKLNSSASVEFDLEEYDKFCANFPFSETEDQLIAINDIKEDLRNGMLMDRLICGDVGFGKTEVAMRAVFMVAKSLNEHLPQVAVVVPTTILCSQHFSRFIERFKGFGLNIKQLSSVISSKEAKIIRSELESGKINIIIGTHSLLHKNIKFFNLKLLIIDEEQHFGVGQKEFLKSLKSSSHVLAMSATPIPRTLQMSMTGLKELSIIATPPLNRLEVHTSVMPYDPVIIRDALLREHFRGGRSFYVVPRIKDIEDIAKQLKQIVPELSYKIAYGKMTPSKIDEVMSEFYAGKFDILVSTTIIESGIDIAEANTMIIHNADMLGLSQLYQLRGRIGRGKMRGYAYLTVASHKKMTSHSLRRLEIIQNSCALGSGFTIASRDMDLRGFGNLIGEEQSGQIKEVGTELYQEMLEEQIAIFKDESIVSEQPFIPTINLGLSVFIPDNYVADAALKLGLYRRIGNLSNEIEVETFKDEMIDRFGLLPIEFNNLLDIVKIKLLCFKLNIENLDSGDNGFVIKFYKNADMTDKILKFVTTYSNQAKIKPDNKLVYIKKLVDKNIIVEANQLLWNLSEV</sequence>
<organism>
    <name type="scientific">Rickettsia conorii (strain ATCC VR-613 / Malish 7)</name>
    <dbReference type="NCBI Taxonomy" id="272944"/>
    <lineage>
        <taxon>Bacteria</taxon>
        <taxon>Pseudomonadati</taxon>
        <taxon>Pseudomonadota</taxon>
        <taxon>Alphaproteobacteria</taxon>
        <taxon>Rickettsiales</taxon>
        <taxon>Rickettsiaceae</taxon>
        <taxon>Rickettsieae</taxon>
        <taxon>Rickettsia</taxon>
        <taxon>spotted fever group</taxon>
    </lineage>
</organism>